<accession>Q89DR8</accession>
<sequence length="396" mass="42714">MTQHDNDPAWPDHKPTALLVLADGTVLEGFGLGAEGHAVGEVCFNTAMTGYEEILTDPSYAGQLITFTFPHIGNVGTNEEDIETVNMAATPGARGVILRTAITDPSNYRATKHLDAWLKARGIIGLSGIDTRALTALIRSKGMPNAVIAHARNGEFDLHGLKEEAREWPGLEGMDLVPMVTSGQRFTWDETPWLWDKGFGQQDKTEFNVVAIDYGIKRNILRLLAGVGCKVTVVPATTSAEDILAMKPDGVFLSNGPGDPAATGKYAVPVIRDVIKSGTPTFGICLGHQMLGLAVGAKTKKMHQGHHGANHPVKDETTGKVEITSMNHGFAVDEKTLPKGATQTHISLFDGSNCGIQLDGKPVFSVQYHPEASPGPRDSHYLFQRFAELMRQKKSA</sequence>
<evidence type="ECO:0000255" key="1">
    <source>
        <dbReference type="HAMAP-Rule" id="MF_01209"/>
    </source>
</evidence>
<name>CARA_BRADU</name>
<comment type="function">
    <text evidence="1">Small subunit of the glutamine-dependent carbamoyl phosphate synthetase (CPSase). CPSase catalyzes the formation of carbamoyl phosphate from the ammonia moiety of glutamine, carbonate, and phosphate donated by ATP, constituting the first step of 2 biosynthetic pathways, one leading to arginine and/or urea and the other to pyrimidine nucleotides. The small subunit (glutamine amidotransferase) binds and cleaves glutamine to supply the large subunit with the substrate ammonia.</text>
</comment>
<comment type="catalytic activity">
    <reaction evidence="1">
        <text>hydrogencarbonate + L-glutamine + 2 ATP + H2O = carbamoyl phosphate + L-glutamate + 2 ADP + phosphate + 2 H(+)</text>
        <dbReference type="Rhea" id="RHEA:18633"/>
        <dbReference type="ChEBI" id="CHEBI:15377"/>
        <dbReference type="ChEBI" id="CHEBI:15378"/>
        <dbReference type="ChEBI" id="CHEBI:17544"/>
        <dbReference type="ChEBI" id="CHEBI:29985"/>
        <dbReference type="ChEBI" id="CHEBI:30616"/>
        <dbReference type="ChEBI" id="CHEBI:43474"/>
        <dbReference type="ChEBI" id="CHEBI:58228"/>
        <dbReference type="ChEBI" id="CHEBI:58359"/>
        <dbReference type="ChEBI" id="CHEBI:456216"/>
        <dbReference type="EC" id="6.3.5.5"/>
    </reaction>
</comment>
<comment type="catalytic activity">
    <molecule>Carbamoyl phosphate synthase small chain</molecule>
    <reaction evidence="1">
        <text>L-glutamine + H2O = L-glutamate + NH4(+)</text>
        <dbReference type="Rhea" id="RHEA:15889"/>
        <dbReference type="ChEBI" id="CHEBI:15377"/>
        <dbReference type="ChEBI" id="CHEBI:28938"/>
        <dbReference type="ChEBI" id="CHEBI:29985"/>
        <dbReference type="ChEBI" id="CHEBI:58359"/>
    </reaction>
</comment>
<comment type="pathway">
    <text evidence="1">Amino-acid biosynthesis; L-arginine biosynthesis; carbamoyl phosphate from bicarbonate: step 1/1.</text>
</comment>
<comment type="pathway">
    <text evidence="1">Pyrimidine metabolism; UMP biosynthesis via de novo pathway; (S)-dihydroorotate from bicarbonate: step 1/3.</text>
</comment>
<comment type="subunit">
    <text evidence="1">Composed of two chains; the small (or glutamine) chain promotes the hydrolysis of glutamine to ammonia, which is used by the large (or ammonia) chain to synthesize carbamoyl phosphate. Tetramer of heterodimers (alpha,beta)4.</text>
</comment>
<comment type="similarity">
    <text evidence="1">Belongs to the CarA family.</text>
</comment>
<keyword id="KW-0028">Amino-acid biosynthesis</keyword>
<keyword id="KW-0055">Arginine biosynthesis</keyword>
<keyword id="KW-0067">ATP-binding</keyword>
<keyword id="KW-0315">Glutamine amidotransferase</keyword>
<keyword id="KW-0436">Ligase</keyword>
<keyword id="KW-0547">Nucleotide-binding</keyword>
<keyword id="KW-0665">Pyrimidine biosynthesis</keyword>
<keyword id="KW-1185">Reference proteome</keyword>
<proteinExistence type="inferred from homology"/>
<organism>
    <name type="scientific">Bradyrhizobium diazoefficiens (strain JCM 10833 / BCRC 13528 / IAM 13628 / NBRC 14792 / USDA 110)</name>
    <dbReference type="NCBI Taxonomy" id="224911"/>
    <lineage>
        <taxon>Bacteria</taxon>
        <taxon>Pseudomonadati</taxon>
        <taxon>Pseudomonadota</taxon>
        <taxon>Alphaproteobacteria</taxon>
        <taxon>Hyphomicrobiales</taxon>
        <taxon>Nitrobacteraceae</taxon>
        <taxon>Bradyrhizobium</taxon>
    </lineage>
</organism>
<reference key="1">
    <citation type="journal article" date="2002" name="DNA Res.">
        <title>Complete genomic sequence of nitrogen-fixing symbiotic bacterium Bradyrhizobium japonicum USDA110.</title>
        <authorList>
            <person name="Kaneko T."/>
            <person name="Nakamura Y."/>
            <person name="Sato S."/>
            <person name="Minamisawa K."/>
            <person name="Uchiumi T."/>
            <person name="Sasamoto S."/>
            <person name="Watanabe A."/>
            <person name="Idesawa K."/>
            <person name="Iriguchi M."/>
            <person name="Kawashima K."/>
            <person name="Kohara M."/>
            <person name="Matsumoto M."/>
            <person name="Shimpo S."/>
            <person name="Tsuruoka H."/>
            <person name="Wada T."/>
            <person name="Yamada M."/>
            <person name="Tabata S."/>
        </authorList>
    </citation>
    <scope>NUCLEOTIDE SEQUENCE [LARGE SCALE GENOMIC DNA]</scope>
    <source>
        <strain>JCM 10833 / BCRC 13528 / IAM 13628 / NBRC 14792 / USDA 110</strain>
    </source>
</reference>
<gene>
    <name evidence="1" type="primary">carA</name>
    <name type="ordered locus">blr7371</name>
</gene>
<dbReference type="EC" id="6.3.5.5" evidence="1"/>
<dbReference type="EMBL" id="BA000040">
    <property type="protein sequence ID" value="BAC52636.1"/>
    <property type="molecule type" value="Genomic_DNA"/>
</dbReference>
<dbReference type="RefSeq" id="NP_774011.1">
    <property type="nucleotide sequence ID" value="NC_004463.1"/>
</dbReference>
<dbReference type="RefSeq" id="WP_011090106.1">
    <property type="nucleotide sequence ID" value="NC_004463.1"/>
</dbReference>
<dbReference type="SMR" id="Q89DR8"/>
<dbReference type="FunCoup" id="Q89DR8">
    <property type="interactions" value="758"/>
</dbReference>
<dbReference type="STRING" id="224911.AAV28_34535"/>
<dbReference type="EnsemblBacteria" id="BAC52636">
    <property type="protein sequence ID" value="BAC52636"/>
    <property type="gene ID" value="BAC52636"/>
</dbReference>
<dbReference type="GeneID" id="46494329"/>
<dbReference type="KEGG" id="bja:blr7371"/>
<dbReference type="PATRIC" id="fig|224911.44.peg.7456"/>
<dbReference type="eggNOG" id="COG0505">
    <property type="taxonomic scope" value="Bacteria"/>
</dbReference>
<dbReference type="HOGENOM" id="CLU_035901_2_2_5"/>
<dbReference type="InParanoid" id="Q89DR8"/>
<dbReference type="OrthoDB" id="9804328at2"/>
<dbReference type="PhylomeDB" id="Q89DR8"/>
<dbReference type="UniPathway" id="UPA00068">
    <property type="reaction ID" value="UER00171"/>
</dbReference>
<dbReference type="UniPathway" id="UPA00070">
    <property type="reaction ID" value="UER00115"/>
</dbReference>
<dbReference type="Proteomes" id="UP000002526">
    <property type="component" value="Chromosome"/>
</dbReference>
<dbReference type="GO" id="GO:0005951">
    <property type="term" value="C:carbamoyl-phosphate synthase complex"/>
    <property type="evidence" value="ECO:0000318"/>
    <property type="project" value="GO_Central"/>
</dbReference>
<dbReference type="GO" id="GO:0005737">
    <property type="term" value="C:cytoplasm"/>
    <property type="evidence" value="ECO:0000318"/>
    <property type="project" value="GO_Central"/>
</dbReference>
<dbReference type="GO" id="GO:0005524">
    <property type="term" value="F:ATP binding"/>
    <property type="evidence" value="ECO:0007669"/>
    <property type="project" value="UniProtKB-UniRule"/>
</dbReference>
<dbReference type="GO" id="GO:0004088">
    <property type="term" value="F:carbamoyl-phosphate synthase (glutamine-hydrolyzing) activity"/>
    <property type="evidence" value="ECO:0007669"/>
    <property type="project" value="UniProtKB-UniRule"/>
</dbReference>
<dbReference type="GO" id="GO:0004359">
    <property type="term" value="F:glutaminase activity"/>
    <property type="evidence" value="ECO:0007669"/>
    <property type="project" value="RHEA"/>
</dbReference>
<dbReference type="GO" id="GO:0006207">
    <property type="term" value="P:'de novo' pyrimidine nucleobase biosynthetic process"/>
    <property type="evidence" value="ECO:0007669"/>
    <property type="project" value="InterPro"/>
</dbReference>
<dbReference type="GO" id="GO:0044205">
    <property type="term" value="P:'de novo' UMP biosynthetic process"/>
    <property type="evidence" value="ECO:0007669"/>
    <property type="project" value="UniProtKB-UniRule"/>
</dbReference>
<dbReference type="GO" id="GO:0006541">
    <property type="term" value="P:glutamine metabolic process"/>
    <property type="evidence" value="ECO:0007669"/>
    <property type="project" value="InterPro"/>
</dbReference>
<dbReference type="GO" id="GO:0006526">
    <property type="term" value="P:L-arginine biosynthetic process"/>
    <property type="evidence" value="ECO:0000318"/>
    <property type="project" value="GO_Central"/>
</dbReference>
<dbReference type="CDD" id="cd01744">
    <property type="entry name" value="GATase1_CPSase"/>
    <property type="match status" value="1"/>
</dbReference>
<dbReference type="FunFam" id="3.40.50.880:FF:000011">
    <property type="entry name" value="Carbamoyl-phosphate synthase small chain"/>
    <property type="match status" value="1"/>
</dbReference>
<dbReference type="FunFam" id="3.50.30.20:FF:000001">
    <property type="entry name" value="Carbamoyl-phosphate synthase small chain"/>
    <property type="match status" value="1"/>
</dbReference>
<dbReference type="Gene3D" id="3.40.50.880">
    <property type="match status" value="1"/>
</dbReference>
<dbReference type="Gene3D" id="3.50.30.20">
    <property type="entry name" value="Carbamoyl-phosphate synthase small subunit, N-terminal domain"/>
    <property type="match status" value="1"/>
</dbReference>
<dbReference type="HAMAP" id="MF_01209">
    <property type="entry name" value="CPSase_S_chain"/>
    <property type="match status" value="1"/>
</dbReference>
<dbReference type="InterPro" id="IPR050472">
    <property type="entry name" value="Anth_synth/Amidotransfase"/>
</dbReference>
<dbReference type="InterPro" id="IPR006274">
    <property type="entry name" value="CarbamoylP_synth_ssu"/>
</dbReference>
<dbReference type="InterPro" id="IPR002474">
    <property type="entry name" value="CarbamoylP_synth_ssu_N"/>
</dbReference>
<dbReference type="InterPro" id="IPR036480">
    <property type="entry name" value="CarbP_synth_ssu_N_sf"/>
</dbReference>
<dbReference type="InterPro" id="IPR029062">
    <property type="entry name" value="Class_I_gatase-like"/>
</dbReference>
<dbReference type="InterPro" id="IPR035686">
    <property type="entry name" value="CPSase_GATase1"/>
</dbReference>
<dbReference type="InterPro" id="IPR017926">
    <property type="entry name" value="GATASE"/>
</dbReference>
<dbReference type="NCBIfam" id="TIGR01368">
    <property type="entry name" value="CPSaseIIsmall"/>
    <property type="match status" value="1"/>
</dbReference>
<dbReference type="NCBIfam" id="NF009475">
    <property type="entry name" value="PRK12838.1"/>
    <property type="match status" value="1"/>
</dbReference>
<dbReference type="PANTHER" id="PTHR43418:SF7">
    <property type="entry name" value="CARBAMOYL-PHOSPHATE SYNTHASE SMALL CHAIN"/>
    <property type="match status" value="1"/>
</dbReference>
<dbReference type="PANTHER" id="PTHR43418">
    <property type="entry name" value="MULTIFUNCTIONAL TRYPTOPHAN BIOSYNTHESIS PROTEIN-RELATED"/>
    <property type="match status" value="1"/>
</dbReference>
<dbReference type="Pfam" id="PF00988">
    <property type="entry name" value="CPSase_sm_chain"/>
    <property type="match status" value="1"/>
</dbReference>
<dbReference type="Pfam" id="PF00117">
    <property type="entry name" value="GATase"/>
    <property type="match status" value="1"/>
</dbReference>
<dbReference type="PRINTS" id="PR00097">
    <property type="entry name" value="ANTSNTHASEII"/>
</dbReference>
<dbReference type="PRINTS" id="PR00099">
    <property type="entry name" value="CPSGATASE"/>
</dbReference>
<dbReference type="PRINTS" id="PR00096">
    <property type="entry name" value="GATASE"/>
</dbReference>
<dbReference type="SMART" id="SM01097">
    <property type="entry name" value="CPSase_sm_chain"/>
    <property type="match status" value="1"/>
</dbReference>
<dbReference type="SUPFAM" id="SSF52021">
    <property type="entry name" value="Carbamoyl phosphate synthetase, small subunit N-terminal domain"/>
    <property type="match status" value="1"/>
</dbReference>
<dbReference type="SUPFAM" id="SSF52317">
    <property type="entry name" value="Class I glutamine amidotransferase-like"/>
    <property type="match status" value="1"/>
</dbReference>
<dbReference type="PROSITE" id="PS51273">
    <property type="entry name" value="GATASE_TYPE_1"/>
    <property type="match status" value="1"/>
</dbReference>
<feature type="chain" id="PRO_0000112258" description="Carbamoyl phosphate synthase small chain">
    <location>
        <begin position="1"/>
        <end position="396"/>
    </location>
</feature>
<feature type="domain" description="Glutamine amidotransferase type-1" evidence="1">
    <location>
        <begin position="208"/>
        <end position="396"/>
    </location>
</feature>
<feature type="region of interest" description="CPSase" evidence="1">
    <location>
        <begin position="1"/>
        <end position="204"/>
    </location>
</feature>
<feature type="active site" description="Nucleophile" evidence="1">
    <location>
        <position position="285"/>
    </location>
</feature>
<feature type="active site" evidence="1">
    <location>
        <position position="369"/>
    </location>
</feature>
<feature type="active site" evidence="1">
    <location>
        <position position="371"/>
    </location>
</feature>
<feature type="binding site" evidence="1">
    <location>
        <position position="59"/>
    </location>
    <ligand>
        <name>L-glutamine</name>
        <dbReference type="ChEBI" id="CHEBI:58359"/>
    </ligand>
</feature>
<feature type="binding site" evidence="1">
    <location>
        <position position="256"/>
    </location>
    <ligand>
        <name>L-glutamine</name>
        <dbReference type="ChEBI" id="CHEBI:58359"/>
    </ligand>
</feature>
<feature type="binding site" evidence="1">
    <location>
        <position position="258"/>
    </location>
    <ligand>
        <name>L-glutamine</name>
        <dbReference type="ChEBI" id="CHEBI:58359"/>
    </ligand>
</feature>
<feature type="binding site" evidence="1">
    <location>
        <position position="286"/>
    </location>
    <ligand>
        <name>L-glutamine</name>
        <dbReference type="ChEBI" id="CHEBI:58359"/>
    </ligand>
</feature>
<feature type="binding site" evidence="1">
    <location>
        <position position="289"/>
    </location>
    <ligand>
        <name>L-glutamine</name>
        <dbReference type="ChEBI" id="CHEBI:58359"/>
    </ligand>
</feature>
<feature type="binding site" evidence="1">
    <location>
        <position position="327"/>
    </location>
    <ligand>
        <name>L-glutamine</name>
        <dbReference type="ChEBI" id="CHEBI:58359"/>
    </ligand>
</feature>
<feature type="binding site" evidence="1">
    <location>
        <position position="329"/>
    </location>
    <ligand>
        <name>L-glutamine</name>
        <dbReference type="ChEBI" id="CHEBI:58359"/>
    </ligand>
</feature>
<feature type="binding site" evidence="1">
    <location>
        <position position="330"/>
    </location>
    <ligand>
        <name>L-glutamine</name>
        <dbReference type="ChEBI" id="CHEBI:58359"/>
    </ligand>
</feature>
<protein>
    <recommendedName>
        <fullName evidence="1">Carbamoyl phosphate synthase small chain</fullName>
        <ecNumber evidence="1">6.3.5.5</ecNumber>
    </recommendedName>
    <alternativeName>
        <fullName evidence="1">Carbamoyl phosphate synthetase glutamine chain</fullName>
    </alternativeName>
</protein>